<feature type="chain" id="PRO_0000440856" description="3-dehydro-scyllo-inosose hydrolase">
    <location>
        <begin position="1"/>
        <end position="311"/>
    </location>
</feature>
<feature type="binding site" evidence="1">
    <location>
        <position position="35"/>
    </location>
    <ligand>
        <name>Zn(2+)</name>
        <dbReference type="ChEBI" id="CHEBI:29105"/>
        <label>1</label>
    </ligand>
</feature>
<feature type="binding site" evidence="1">
    <location>
        <position position="37"/>
    </location>
    <ligand>
        <name>Zn(2+)</name>
        <dbReference type="ChEBI" id="CHEBI:29105"/>
        <label>2</label>
    </ligand>
</feature>
<feature type="binding site" evidence="1">
    <location>
        <position position="46"/>
    </location>
    <ligand>
        <name>Zn(2+)</name>
        <dbReference type="ChEBI" id="CHEBI:29105"/>
        <label>1</label>
    </ligand>
</feature>
<feature type="binding site" evidence="1">
    <location>
        <position position="46"/>
    </location>
    <ligand>
        <name>Zn(2+)</name>
        <dbReference type="ChEBI" id="CHEBI:29105"/>
        <label>2</label>
    </ligand>
</feature>
<feature type="binding site" evidence="1">
    <location>
        <position position="117"/>
    </location>
    <ligand>
        <name>Zn(2+)</name>
        <dbReference type="ChEBI" id="CHEBI:29105"/>
        <label>1</label>
    </ligand>
</feature>
<feature type="binding site" evidence="1">
    <location>
        <position position="173"/>
    </location>
    <ligand>
        <name>Zn(2+)</name>
        <dbReference type="ChEBI" id="CHEBI:29105"/>
        <label>2</label>
    </ligand>
</feature>
<keyword id="KW-0378">Hydrolase</keyword>
<keyword id="KW-0479">Metal-binding</keyword>
<keyword id="KW-1185">Reference proteome</keyword>
<keyword id="KW-0862">Zinc</keyword>
<dbReference type="EC" id="3.7.1.-" evidence="2"/>
<dbReference type="EMBL" id="AE000512">
    <property type="protein sequence ID" value="AAD35498.1"/>
    <property type="molecule type" value="Genomic_DNA"/>
</dbReference>
<dbReference type="PIR" id="C72381">
    <property type="entry name" value="C72381"/>
</dbReference>
<dbReference type="RefSeq" id="NP_228223.1">
    <property type="nucleotide sequence ID" value="NC_000853.1"/>
</dbReference>
<dbReference type="SMR" id="Q9WYP4"/>
<dbReference type="STRING" id="243274.TM_0413"/>
<dbReference type="PaxDb" id="243274-THEMA_02660"/>
<dbReference type="EnsemblBacteria" id="AAD35498">
    <property type="protein sequence ID" value="AAD35498"/>
    <property type="gene ID" value="TM_0413"/>
</dbReference>
<dbReference type="KEGG" id="tma:TM0413"/>
<dbReference type="PATRIC" id="fig|243274.5.peg.418"/>
<dbReference type="eggNOG" id="COG1402">
    <property type="taxonomic scope" value="Bacteria"/>
</dbReference>
<dbReference type="InParanoid" id="Q9WYP4"/>
<dbReference type="OrthoDB" id="9801445at2"/>
<dbReference type="BioCyc" id="MetaCyc:MONOMER-17950"/>
<dbReference type="UniPathway" id="UPA00914"/>
<dbReference type="Proteomes" id="UP000008183">
    <property type="component" value="Chromosome"/>
</dbReference>
<dbReference type="GO" id="GO:0016811">
    <property type="term" value="F:hydrolase activity, acting on carbon-nitrogen (but not peptide) bonds, in linear amides"/>
    <property type="evidence" value="ECO:0000318"/>
    <property type="project" value="GO_Central"/>
</dbReference>
<dbReference type="GO" id="GO:0046872">
    <property type="term" value="F:metal ion binding"/>
    <property type="evidence" value="ECO:0007669"/>
    <property type="project" value="UniProtKB-KW"/>
</dbReference>
<dbReference type="GO" id="GO:0006020">
    <property type="term" value="P:inositol metabolic process"/>
    <property type="evidence" value="ECO:0007669"/>
    <property type="project" value="UniProtKB-UniPathway"/>
</dbReference>
<dbReference type="GO" id="GO:0009231">
    <property type="term" value="P:riboflavin biosynthetic process"/>
    <property type="evidence" value="ECO:0000318"/>
    <property type="project" value="GO_Central"/>
</dbReference>
<dbReference type="Gene3D" id="3.40.50.10310">
    <property type="entry name" value="Creatininase"/>
    <property type="match status" value="1"/>
</dbReference>
<dbReference type="InterPro" id="IPR024087">
    <property type="entry name" value="Creatininase-like_sf"/>
</dbReference>
<dbReference type="InterPro" id="IPR003785">
    <property type="entry name" value="Creatininase/forma_Hydrolase"/>
</dbReference>
<dbReference type="InterPro" id="IPR049842">
    <property type="entry name" value="Diketo_inos_hlase_IolN"/>
</dbReference>
<dbReference type="NCBIfam" id="NF041098">
    <property type="entry name" value="diketo_inos_hlase_IolN"/>
    <property type="match status" value="1"/>
</dbReference>
<dbReference type="PANTHER" id="PTHR35005:SF1">
    <property type="entry name" value="2-AMINO-5-FORMYLAMINO-6-RIBOSYLAMINOPYRIMIDIN-4(3H)-ONE 5'-MONOPHOSPHATE DEFORMYLASE"/>
    <property type="match status" value="1"/>
</dbReference>
<dbReference type="PANTHER" id="PTHR35005">
    <property type="entry name" value="3-DEHYDRO-SCYLLO-INOSOSE HYDROLASE"/>
    <property type="match status" value="1"/>
</dbReference>
<dbReference type="Pfam" id="PF02633">
    <property type="entry name" value="Creatininase"/>
    <property type="match status" value="1"/>
</dbReference>
<dbReference type="SUPFAM" id="SSF102215">
    <property type="entry name" value="Creatininase"/>
    <property type="match status" value="1"/>
</dbReference>
<accession>Q9WYP4</accession>
<proteinExistence type="evidence at protein level"/>
<name>IOLN_THEMA</name>
<gene>
    <name evidence="3" type="primary">iolN</name>
    <name evidence="6" type="ordered locus">TM_0413</name>
</gene>
<comment type="function">
    <text evidence="2">Catalyzes the ring-opening hydrolysis of 3-dehydro-scyllo-inosose (diketo-inositol) to 5-dehydro-L-gluconate, and thus probably functions in a myo-inositol degradation pathway together with IolG, IolM and IolO.</text>
</comment>
<comment type="catalytic activity">
    <reaction evidence="2">
        <text>3-dehydro-scyllo-inosose + H2O = 5-dehydro-L-gluconate + H(+)</text>
        <dbReference type="Rhea" id="RHEA:53288"/>
        <dbReference type="ChEBI" id="CHEBI:15377"/>
        <dbReference type="ChEBI" id="CHEBI:15378"/>
        <dbReference type="ChEBI" id="CHEBI:137015"/>
        <dbReference type="ChEBI" id="CHEBI:137108"/>
    </reaction>
</comment>
<comment type="cofactor">
    <cofactor evidence="1 5">
        <name>Zn(2+)</name>
        <dbReference type="ChEBI" id="CHEBI:29105"/>
    </cofactor>
    <text evidence="1 5">Binds 2 Zn(2+) ions per subunit.</text>
</comment>
<comment type="pathway">
    <text evidence="5">Polyol metabolism; myo-inositol metabolism.</text>
</comment>
<comment type="subunit">
    <text evidence="2">Homotrimer.</text>
</comment>
<comment type="miscellaneous">
    <text evidence="5">The proposed catalytic mechanism involves two water molecules. The first molecule is bound as a bridge between the two metal ions and attacks the carbonyl carbon of the substrate. The second water molecule, that is bound to metal 1, likely functions as a proton donor in catalysis.</text>
</comment>
<comment type="similarity">
    <text evidence="4">Belongs to the creatininase superfamily.</text>
</comment>
<organism>
    <name type="scientific">Thermotoga maritima (strain ATCC 43589 / DSM 3109 / JCM 10099 / NBRC 100826 / MSB8)</name>
    <dbReference type="NCBI Taxonomy" id="243274"/>
    <lineage>
        <taxon>Bacteria</taxon>
        <taxon>Thermotogati</taxon>
        <taxon>Thermotogota</taxon>
        <taxon>Thermotogae</taxon>
        <taxon>Thermotogales</taxon>
        <taxon>Thermotogaceae</taxon>
        <taxon>Thermotoga</taxon>
    </lineage>
</organism>
<reference key="1">
    <citation type="journal article" date="1999" name="Nature">
        <title>Evidence for lateral gene transfer between Archaea and Bacteria from genome sequence of Thermotoga maritima.</title>
        <authorList>
            <person name="Nelson K.E."/>
            <person name="Clayton R.A."/>
            <person name="Gill S.R."/>
            <person name="Gwinn M.L."/>
            <person name="Dodson R.J."/>
            <person name="Haft D.H."/>
            <person name="Hickey E.K."/>
            <person name="Peterson J.D."/>
            <person name="Nelson W.C."/>
            <person name="Ketchum K.A."/>
            <person name="McDonald L.A."/>
            <person name="Utterback T.R."/>
            <person name="Malek J.A."/>
            <person name="Linher K.D."/>
            <person name="Garrett M.M."/>
            <person name="Stewart A.M."/>
            <person name="Cotton M.D."/>
            <person name="Pratt M.S."/>
            <person name="Phillips C.A."/>
            <person name="Richardson D.L."/>
            <person name="Heidelberg J.F."/>
            <person name="Sutton G.G."/>
            <person name="Fleischmann R.D."/>
            <person name="Eisen J.A."/>
            <person name="White O."/>
            <person name="Salzberg S.L."/>
            <person name="Smith H.O."/>
            <person name="Venter J.C."/>
            <person name="Fraser C.M."/>
        </authorList>
    </citation>
    <scope>NUCLEOTIDE SEQUENCE [LARGE SCALE GENOMIC DNA]</scope>
    <source>
        <strain>ATCC 43589 / DSM 3109 / JCM 10099 / NBRC 100826 / MSB8</strain>
    </source>
</reference>
<reference key="2">
    <citation type="journal article" date="2013" name="Environ. Microbiol.">
        <title>Novel inositol catabolic pathway in Thermotoga maritima.</title>
        <authorList>
            <person name="Rodionova I.A."/>
            <person name="Leyn S.A."/>
            <person name="Burkart M.D."/>
            <person name="Boucher N."/>
            <person name="Noll K.M."/>
            <person name="Osterman A.L."/>
            <person name="Rodionov D.A."/>
        </authorList>
    </citation>
    <scope>FUNCTION</scope>
    <scope>CATALYTIC ACTIVITY</scope>
    <scope>COFACTOR</scope>
    <scope>PATHWAY</scope>
    <scope>SUBUNIT</scope>
    <scope>REACTION MECHANISM</scope>
</reference>
<evidence type="ECO:0000250" key="1">
    <source>
        <dbReference type="UniProtKB" id="P83772"/>
    </source>
</evidence>
<evidence type="ECO:0000269" key="2">
    <source>
    </source>
</evidence>
<evidence type="ECO:0000303" key="3">
    <source>
    </source>
</evidence>
<evidence type="ECO:0000305" key="4"/>
<evidence type="ECO:0000305" key="5">
    <source>
    </source>
</evidence>
<evidence type="ECO:0000312" key="6">
    <source>
        <dbReference type="EMBL" id="AAD35498.1"/>
    </source>
</evidence>
<sequence length="311" mass="34947">MERPTGVYFQTMTMKQIRERLKQCDLIIIPVGSTENHGPNAPTGEDTFLVTRMAEQVALKTGCTVAEPIWYGYHPYHHIGMPGTVPVKDEAFIDYLVSVIAGFWNTGFRKQILLNGHGQEFVIPIAIHKFAKIFQVPAIIINLNWYHAIQDKFKTKEEGGPYETPFIHADEVETSWSLALFPEFMHQEWAVDTEPKGFLPEGHIDKAGNLLHRPIAWYGHVGGGPIEVVAYPEGVVGKATLASAEKAKEGVEALLDYLEKLVRDIMERFPAGKLPPAEMLSQRPKEELEALTKEPLTEGWRNLYTAGNLWG</sequence>
<protein>
    <recommendedName>
        <fullName evidence="5">3-dehydro-scyllo-inosose hydrolase</fullName>
        <ecNumber evidence="2">3.7.1.-</ecNumber>
    </recommendedName>
    <alternativeName>
        <fullName evidence="3">Diketo-inositol hydrolase</fullName>
    </alternativeName>
</protein>